<comment type="catalytic activity">
    <reaction evidence="1">
        <text>L-arginine + H2O = L-citrulline + NH4(+)</text>
        <dbReference type="Rhea" id="RHEA:19597"/>
        <dbReference type="ChEBI" id="CHEBI:15377"/>
        <dbReference type="ChEBI" id="CHEBI:28938"/>
        <dbReference type="ChEBI" id="CHEBI:32682"/>
        <dbReference type="ChEBI" id="CHEBI:57743"/>
        <dbReference type="EC" id="3.5.3.6"/>
    </reaction>
</comment>
<comment type="pathway">
    <text evidence="1">Amino-acid degradation; L-arginine degradation via ADI pathway; carbamoyl phosphate from L-arginine: step 1/2.</text>
</comment>
<comment type="subcellular location">
    <subcellularLocation>
        <location evidence="1">Cytoplasm</location>
    </subcellularLocation>
</comment>
<comment type="similarity">
    <text evidence="1">Belongs to the arginine deiminase family.</text>
</comment>
<feature type="chain" id="PRO_1000005725" description="Arginine deiminase">
    <location>
        <begin position="1"/>
        <end position="411"/>
    </location>
</feature>
<feature type="active site" description="Amidino-cysteine intermediate" evidence="1">
    <location>
        <position position="401"/>
    </location>
</feature>
<accession>Q1JAR2</accession>
<gene>
    <name evidence="1" type="primary">arcA</name>
    <name type="ordered locus">MGAS2096_Spy1294</name>
</gene>
<organism>
    <name type="scientific">Streptococcus pyogenes serotype M12 (strain MGAS2096)</name>
    <dbReference type="NCBI Taxonomy" id="370553"/>
    <lineage>
        <taxon>Bacteria</taxon>
        <taxon>Bacillati</taxon>
        <taxon>Bacillota</taxon>
        <taxon>Bacilli</taxon>
        <taxon>Lactobacillales</taxon>
        <taxon>Streptococcaceae</taxon>
        <taxon>Streptococcus</taxon>
    </lineage>
</organism>
<keyword id="KW-0056">Arginine metabolism</keyword>
<keyword id="KW-0963">Cytoplasm</keyword>
<keyword id="KW-0378">Hydrolase</keyword>
<sequence>MTAQTPIHVYSEIGKLKKVLLHRPGKEIENLMPDYLERLLFDDIPFLEDAQKEHDAFAQALRDEGIEVLYLETLAAESLVTPEIREAFIDEYLSEANIRGRATKKAIRELLMAIEDNQELIEKTMAGVQKSELPEIPASEKGLTDLVESNYPFAIDPMPNLYFTRDPFATIGTGVSLNHMFSETRNRETLYGKYIFTHHPIYGGGKVPMVYDRNETTRIEGGDELVLSKDVLAVGISQRTDAASIEKLLVNIFKQNLGFKKVLAFEFANNRKFMHLDTVFTMVDYDKFTIHPEIEGDLRVYSVTYDNEELHIVEEKGDLAELLAANLGVEKVDLIRCGGDNLVAAGREQWNDGSNTLTIAPGVVVVYNRNTITNAILESKGLKLIKIHGSELVRGRGGPRCMSMPFEREDI</sequence>
<dbReference type="EC" id="3.5.3.6" evidence="1"/>
<dbReference type="EMBL" id="CP000261">
    <property type="protein sequence ID" value="ABF36346.1"/>
    <property type="molecule type" value="Genomic_DNA"/>
</dbReference>
<dbReference type="SMR" id="Q1JAR2"/>
<dbReference type="KEGG" id="spj:MGAS2096_Spy1294"/>
<dbReference type="HOGENOM" id="CLU_052662_0_1_9"/>
<dbReference type="UniPathway" id="UPA00254">
    <property type="reaction ID" value="UER00364"/>
</dbReference>
<dbReference type="GO" id="GO:0005737">
    <property type="term" value="C:cytoplasm"/>
    <property type="evidence" value="ECO:0007669"/>
    <property type="project" value="UniProtKB-SubCell"/>
</dbReference>
<dbReference type="GO" id="GO:0016990">
    <property type="term" value="F:arginine deiminase activity"/>
    <property type="evidence" value="ECO:0007669"/>
    <property type="project" value="UniProtKB-UniRule"/>
</dbReference>
<dbReference type="GO" id="GO:0019547">
    <property type="term" value="P:arginine catabolic process to ornithine"/>
    <property type="evidence" value="ECO:0007669"/>
    <property type="project" value="UniProtKB-UniRule"/>
</dbReference>
<dbReference type="GO" id="GO:0019546">
    <property type="term" value="P:arginine deiminase pathway"/>
    <property type="evidence" value="ECO:0007669"/>
    <property type="project" value="TreeGrafter"/>
</dbReference>
<dbReference type="Gene3D" id="1.10.3930.10">
    <property type="entry name" value="Arginine deiminase"/>
    <property type="match status" value="1"/>
</dbReference>
<dbReference type="Gene3D" id="3.75.10.10">
    <property type="entry name" value="L-arginine/glycine Amidinotransferase, Chain A"/>
    <property type="match status" value="1"/>
</dbReference>
<dbReference type="HAMAP" id="MF_00242">
    <property type="entry name" value="Arg_deiminase"/>
    <property type="match status" value="1"/>
</dbReference>
<dbReference type="InterPro" id="IPR003876">
    <property type="entry name" value="Arg_deiminase"/>
</dbReference>
<dbReference type="NCBIfam" id="TIGR01078">
    <property type="entry name" value="arcA"/>
    <property type="match status" value="1"/>
</dbReference>
<dbReference type="NCBIfam" id="NF002381">
    <property type="entry name" value="PRK01388.1"/>
    <property type="match status" value="1"/>
</dbReference>
<dbReference type="PANTHER" id="PTHR47271">
    <property type="entry name" value="ARGININE DEIMINASE"/>
    <property type="match status" value="1"/>
</dbReference>
<dbReference type="PANTHER" id="PTHR47271:SF2">
    <property type="entry name" value="ARGININE DEIMINASE"/>
    <property type="match status" value="1"/>
</dbReference>
<dbReference type="Pfam" id="PF02274">
    <property type="entry name" value="ADI"/>
    <property type="match status" value="1"/>
</dbReference>
<dbReference type="PIRSF" id="PIRSF006356">
    <property type="entry name" value="Arg_deiminase"/>
    <property type="match status" value="1"/>
</dbReference>
<dbReference type="PRINTS" id="PR01466">
    <property type="entry name" value="ARGDEIMINASE"/>
</dbReference>
<dbReference type="SUPFAM" id="SSF55909">
    <property type="entry name" value="Pentein"/>
    <property type="match status" value="1"/>
</dbReference>
<proteinExistence type="inferred from homology"/>
<protein>
    <recommendedName>
        <fullName evidence="1">Arginine deiminase</fullName>
        <shortName evidence="1">ADI</shortName>
        <ecNumber evidence="1">3.5.3.6</ecNumber>
    </recommendedName>
    <alternativeName>
        <fullName evidence="1">Arginine dihydrolase</fullName>
        <shortName evidence="1">AD</shortName>
    </alternativeName>
</protein>
<name>ARCA_STRPB</name>
<reference key="1">
    <citation type="journal article" date="2006" name="Proc. Natl. Acad. Sci. U.S.A.">
        <title>Molecular genetic anatomy of inter- and intraserotype variation in the human bacterial pathogen group A Streptococcus.</title>
        <authorList>
            <person name="Beres S.B."/>
            <person name="Richter E.W."/>
            <person name="Nagiec M.J."/>
            <person name="Sumby P."/>
            <person name="Porcella S.F."/>
            <person name="DeLeo F.R."/>
            <person name="Musser J.M."/>
        </authorList>
    </citation>
    <scope>NUCLEOTIDE SEQUENCE [LARGE SCALE GENOMIC DNA]</scope>
    <source>
        <strain>MGAS2096</strain>
    </source>
</reference>
<evidence type="ECO:0000255" key="1">
    <source>
        <dbReference type="HAMAP-Rule" id="MF_00242"/>
    </source>
</evidence>